<name>CASP3_VITVI</name>
<feature type="chain" id="PRO_0000370304" description="Casparian strip membrane protein 3">
    <location>
        <begin position="1"/>
        <end position="186"/>
    </location>
</feature>
<feature type="topological domain" description="Cytoplasmic" evidence="2">
    <location>
        <begin position="1"/>
        <end position="26"/>
    </location>
</feature>
<feature type="transmembrane region" description="Helical" evidence="2">
    <location>
        <begin position="27"/>
        <end position="47"/>
    </location>
</feature>
<feature type="topological domain" description="Extracellular" evidence="2">
    <location>
        <begin position="48"/>
        <end position="74"/>
    </location>
</feature>
<feature type="transmembrane region" description="Helical" evidence="2">
    <location>
        <begin position="75"/>
        <end position="95"/>
    </location>
</feature>
<feature type="topological domain" description="Cytoplasmic" evidence="2">
    <location>
        <begin position="96"/>
        <end position="107"/>
    </location>
</feature>
<feature type="transmembrane region" description="Helical" evidence="2">
    <location>
        <begin position="108"/>
        <end position="128"/>
    </location>
</feature>
<feature type="topological domain" description="Extracellular" evidence="2">
    <location>
        <begin position="129"/>
        <end position="161"/>
    </location>
</feature>
<feature type="transmembrane region" description="Helical" evidence="2">
    <location>
        <begin position="162"/>
        <end position="182"/>
    </location>
</feature>
<feature type="topological domain" description="Cytoplasmic" evidence="2">
    <location>
        <begin position="183"/>
        <end position="186"/>
    </location>
</feature>
<feature type="glycosylation site" description="N-linked (GlcNAc...) asparagine" evidence="2">
    <location>
        <position position="51"/>
    </location>
</feature>
<accession>A7PMY7</accession>
<accession>F6H5U8</accession>
<keyword id="KW-1003">Cell membrane</keyword>
<keyword id="KW-0961">Cell wall biogenesis/degradation</keyword>
<keyword id="KW-0325">Glycoprotein</keyword>
<keyword id="KW-0472">Membrane</keyword>
<keyword id="KW-1185">Reference proteome</keyword>
<keyword id="KW-0812">Transmembrane</keyword>
<keyword id="KW-1133">Transmembrane helix</keyword>
<organism>
    <name type="scientific">Vitis vinifera</name>
    <name type="common">Grape</name>
    <dbReference type="NCBI Taxonomy" id="29760"/>
    <lineage>
        <taxon>Eukaryota</taxon>
        <taxon>Viridiplantae</taxon>
        <taxon>Streptophyta</taxon>
        <taxon>Embryophyta</taxon>
        <taxon>Tracheophyta</taxon>
        <taxon>Spermatophyta</taxon>
        <taxon>Magnoliopsida</taxon>
        <taxon>eudicotyledons</taxon>
        <taxon>Gunneridae</taxon>
        <taxon>Pentapetalae</taxon>
        <taxon>rosids</taxon>
        <taxon>Vitales</taxon>
        <taxon>Vitaceae</taxon>
        <taxon>Viteae</taxon>
        <taxon>Vitis</taxon>
    </lineage>
</organism>
<gene>
    <name type="ordered locus">VIT_14s0108g01050</name>
    <name type="ORF">GSVIVT00020996001</name>
    <name type="ORF">GSVIVT01011443001</name>
    <name type="ORF">VIT_00011443001</name>
    <name type="ORF">Vv14s0108g01050</name>
</gene>
<protein>
    <recommendedName>
        <fullName>Casparian strip membrane protein 3</fullName>
        <shortName>VvCASP3</shortName>
    </recommendedName>
</protein>
<proteinExistence type="inferred from homology"/>
<reference key="1">
    <citation type="journal article" date="2007" name="Nature">
        <title>The grapevine genome sequence suggests ancestral hexaploidization in major angiosperm phyla.</title>
        <authorList>
            <person name="Jaillon O."/>
            <person name="Aury J.-M."/>
            <person name="Noel B."/>
            <person name="Policriti A."/>
            <person name="Clepet C."/>
            <person name="Casagrande A."/>
            <person name="Choisne N."/>
            <person name="Aubourg S."/>
            <person name="Vitulo N."/>
            <person name="Jubin C."/>
            <person name="Vezzi A."/>
            <person name="Legeai F."/>
            <person name="Hugueney P."/>
            <person name="Dasilva C."/>
            <person name="Horner D."/>
            <person name="Mica E."/>
            <person name="Jublot D."/>
            <person name="Poulain J."/>
            <person name="Bruyere C."/>
            <person name="Billault A."/>
            <person name="Segurens B."/>
            <person name="Gouyvenoux M."/>
            <person name="Ugarte E."/>
            <person name="Cattonaro F."/>
            <person name="Anthouard V."/>
            <person name="Vico V."/>
            <person name="Del Fabbro C."/>
            <person name="Alaux M."/>
            <person name="Di Gaspero G."/>
            <person name="Dumas V."/>
            <person name="Felice N."/>
            <person name="Paillard S."/>
            <person name="Juman I."/>
            <person name="Moroldo M."/>
            <person name="Scalabrin S."/>
            <person name="Canaguier A."/>
            <person name="Le Clainche I."/>
            <person name="Malacrida G."/>
            <person name="Durand E."/>
            <person name="Pesole G."/>
            <person name="Laucou V."/>
            <person name="Chatelet P."/>
            <person name="Merdinoglu D."/>
            <person name="Delledonne M."/>
            <person name="Pezzotti M."/>
            <person name="Lecharny A."/>
            <person name="Scarpelli C."/>
            <person name="Artiguenave F."/>
            <person name="Pe M.E."/>
            <person name="Valle G."/>
            <person name="Morgante M."/>
            <person name="Caboche M."/>
            <person name="Adam-Blondon A.-F."/>
            <person name="Weissenbach J."/>
            <person name="Quetier F."/>
            <person name="Wincker P."/>
        </authorList>
    </citation>
    <scope>NUCLEOTIDE SEQUENCE [LARGE SCALE GENOMIC DNA]</scope>
    <source>
        <strain>cv. Pinot noir / PN40024</strain>
    </source>
</reference>
<reference key="2">
    <citation type="journal article" date="2014" name="Plant Physiol.">
        <title>Functional and evolutionary analysis of the CASPARIAN STRIP MEMBRANE DOMAIN PROTEIN family.</title>
        <authorList>
            <person name="Roppolo D."/>
            <person name="Boeckmann B."/>
            <person name="Pfister A."/>
            <person name="Boutet E."/>
            <person name="Rubio M.C."/>
            <person name="Denervaud-Tendon V."/>
            <person name="Vermeer J.E."/>
            <person name="Gheyselinck J."/>
            <person name="Xenarios I."/>
            <person name="Geldner N."/>
        </authorList>
    </citation>
    <scope>GENE FAMILY</scope>
    <scope>NOMENCLATURE</scope>
</reference>
<sequence length="186" mass="19875">MKAGALELGEGSKTSIPRGGVNRGISILDFILRLITIIGTLGSAIAMGTTNETLPFFTQFTQFRAEYDDLPTFTFFVIANSIVSGYLVLSLPMSILHIVRSGARASRIVLIFFDTAMLALLTAAASAASAIVYLAHKGNAQANWFAICQQFKSFCERISGSLIGSFGGIILFILLVLLSAVALSRC</sequence>
<comment type="function">
    <text evidence="1">Regulates membrane-cell wall junctions and localized cell wall deposition. Required for establishment of the Casparian strip membrane domain (CSD) and the subsequent formation of Casparian strips, a cell wall modification of the root endodermis that determines an apoplastic barrier between the intraorganismal apoplasm and the extraorganismal apoplasm and prevents lateral diffusion (By similarity).</text>
</comment>
<comment type="subunit">
    <text evidence="1">Homodimer and heterodimers.</text>
</comment>
<comment type="subcellular location">
    <subcellularLocation>
        <location evidence="1">Cell membrane</location>
        <topology evidence="1">Multi-pass membrane protein</topology>
    </subcellularLocation>
    <text evidence="1">Very restricted localization following a belt shape within the plasma membrane which coincides with the position of the Casparian strip membrane domain in the root endodermis.</text>
</comment>
<comment type="similarity">
    <text evidence="3">Belongs to the Casparian strip membrane proteins (CASP) family.</text>
</comment>
<comment type="sequence caution" evidence="3">
    <conflict type="erroneous gene model prediction">
        <sequence resource="EMBL-CDS" id="CCB47569"/>
    </conflict>
</comment>
<evidence type="ECO:0000250" key="1"/>
<evidence type="ECO:0000255" key="2"/>
<evidence type="ECO:0000305" key="3"/>
<dbReference type="EMBL" id="FN597038">
    <property type="protein sequence ID" value="CCB47569.1"/>
    <property type="status" value="ALT_SEQ"/>
    <property type="molecule type" value="Genomic_DNA"/>
</dbReference>
<dbReference type="SMR" id="A7PMY7"/>
<dbReference type="FunCoup" id="A7PMY7">
    <property type="interactions" value="2"/>
</dbReference>
<dbReference type="PaxDb" id="29760-VIT_14s0108g01050.t01"/>
<dbReference type="EnsemblPlants" id="Vitvi14g03091_t001">
    <property type="protein sequence ID" value="Vitvi14g03091_P001"/>
    <property type="gene ID" value="Vitvi14g03091"/>
</dbReference>
<dbReference type="Gramene" id="Vitvi14g03091_t001">
    <property type="protein sequence ID" value="Vitvi14g03091_P001"/>
    <property type="gene ID" value="Vitvi14g03091"/>
</dbReference>
<dbReference type="eggNOG" id="KOG4197">
    <property type="taxonomic scope" value="Eukaryota"/>
</dbReference>
<dbReference type="HOGENOM" id="CLU_002706_7_1_1"/>
<dbReference type="InParanoid" id="A7PMY7"/>
<dbReference type="OMA" id="HADWFSI"/>
<dbReference type="OrthoDB" id="753675at2759"/>
<dbReference type="Proteomes" id="UP000009183">
    <property type="component" value="Chromosome 14"/>
</dbReference>
<dbReference type="GO" id="GO:0005886">
    <property type="term" value="C:plasma membrane"/>
    <property type="evidence" value="ECO:0000318"/>
    <property type="project" value="GO_Central"/>
</dbReference>
<dbReference type="GO" id="GO:0042545">
    <property type="term" value="P:cell wall modification"/>
    <property type="evidence" value="ECO:0000318"/>
    <property type="project" value="GO_Central"/>
</dbReference>
<dbReference type="GO" id="GO:0007043">
    <property type="term" value="P:cell-cell junction assembly"/>
    <property type="evidence" value="ECO:0000318"/>
    <property type="project" value="GO_Central"/>
</dbReference>
<dbReference type="InterPro" id="IPR006459">
    <property type="entry name" value="CASP/CASPL"/>
</dbReference>
<dbReference type="InterPro" id="IPR006702">
    <property type="entry name" value="CASP_dom"/>
</dbReference>
<dbReference type="InterPro" id="IPR044173">
    <property type="entry name" value="CASPL"/>
</dbReference>
<dbReference type="NCBIfam" id="TIGR01569">
    <property type="entry name" value="A_tha_TIGR01569"/>
    <property type="match status" value="1"/>
</dbReference>
<dbReference type="PANTHER" id="PTHR36488:SF12">
    <property type="entry name" value="CASP-LIKE PROTEIN"/>
    <property type="match status" value="1"/>
</dbReference>
<dbReference type="PANTHER" id="PTHR36488">
    <property type="entry name" value="CASP-LIKE PROTEIN 1U1"/>
    <property type="match status" value="1"/>
</dbReference>
<dbReference type="Pfam" id="PF04535">
    <property type="entry name" value="CASP_dom"/>
    <property type="match status" value="1"/>
</dbReference>